<reference key="1">
    <citation type="submission" date="2003-05" db="EMBL/GenBank/DDBJ databases">
        <authorList>
            <person name="Shan Y.X."/>
            <person name="Huang C.Q."/>
            <person name="Yu L."/>
        </authorList>
    </citation>
    <scope>NUCLEOTIDE SEQUENCE [MRNA] (ISOFORM 3)</scope>
</reference>
<reference key="2">
    <citation type="journal article" date="2006" name="Nature">
        <title>The DNA sequence and biological annotation of human chromosome 1.</title>
        <authorList>
            <person name="Gregory S.G."/>
            <person name="Barlow K.F."/>
            <person name="McLay K.E."/>
            <person name="Kaul R."/>
            <person name="Swarbreck D."/>
            <person name="Dunham A."/>
            <person name="Scott C.E."/>
            <person name="Howe K.L."/>
            <person name="Woodfine K."/>
            <person name="Spencer C.C.A."/>
            <person name="Jones M.C."/>
            <person name="Gillson C."/>
            <person name="Searle S."/>
            <person name="Zhou Y."/>
            <person name="Kokocinski F."/>
            <person name="McDonald L."/>
            <person name="Evans R."/>
            <person name="Phillips K."/>
            <person name="Atkinson A."/>
            <person name="Cooper R."/>
            <person name="Jones C."/>
            <person name="Hall R.E."/>
            <person name="Andrews T.D."/>
            <person name="Lloyd C."/>
            <person name="Ainscough R."/>
            <person name="Almeida J.P."/>
            <person name="Ambrose K.D."/>
            <person name="Anderson F."/>
            <person name="Andrew R.W."/>
            <person name="Ashwell R.I.S."/>
            <person name="Aubin K."/>
            <person name="Babbage A.K."/>
            <person name="Bagguley C.L."/>
            <person name="Bailey J."/>
            <person name="Beasley H."/>
            <person name="Bethel G."/>
            <person name="Bird C.P."/>
            <person name="Bray-Allen S."/>
            <person name="Brown J.Y."/>
            <person name="Brown A.J."/>
            <person name="Buckley D."/>
            <person name="Burton J."/>
            <person name="Bye J."/>
            <person name="Carder C."/>
            <person name="Chapman J.C."/>
            <person name="Clark S.Y."/>
            <person name="Clarke G."/>
            <person name="Clee C."/>
            <person name="Cobley V."/>
            <person name="Collier R.E."/>
            <person name="Corby N."/>
            <person name="Coville G.J."/>
            <person name="Davies J."/>
            <person name="Deadman R."/>
            <person name="Dunn M."/>
            <person name="Earthrowl M."/>
            <person name="Ellington A.G."/>
            <person name="Errington H."/>
            <person name="Frankish A."/>
            <person name="Frankland J."/>
            <person name="French L."/>
            <person name="Garner P."/>
            <person name="Garnett J."/>
            <person name="Gay L."/>
            <person name="Ghori M.R.J."/>
            <person name="Gibson R."/>
            <person name="Gilby L.M."/>
            <person name="Gillett W."/>
            <person name="Glithero R.J."/>
            <person name="Grafham D.V."/>
            <person name="Griffiths C."/>
            <person name="Griffiths-Jones S."/>
            <person name="Grocock R."/>
            <person name="Hammond S."/>
            <person name="Harrison E.S.I."/>
            <person name="Hart E."/>
            <person name="Haugen E."/>
            <person name="Heath P.D."/>
            <person name="Holmes S."/>
            <person name="Holt K."/>
            <person name="Howden P.J."/>
            <person name="Hunt A.R."/>
            <person name="Hunt S.E."/>
            <person name="Hunter G."/>
            <person name="Isherwood J."/>
            <person name="James R."/>
            <person name="Johnson C."/>
            <person name="Johnson D."/>
            <person name="Joy A."/>
            <person name="Kay M."/>
            <person name="Kershaw J.K."/>
            <person name="Kibukawa M."/>
            <person name="Kimberley A.M."/>
            <person name="King A."/>
            <person name="Knights A.J."/>
            <person name="Lad H."/>
            <person name="Laird G."/>
            <person name="Lawlor S."/>
            <person name="Leongamornlert D.A."/>
            <person name="Lloyd D.M."/>
            <person name="Loveland J."/>
            <person name="Lovell J."/>
            <person name="Lush M.J."/>
            <person name="Lyne R."/>
            <person name="Martin S."/>
            <person name="Mashreghi-Mohammadi M."/>
            <person name="Matthews L."/>
            <person name="Matthews N.S.W."/>
            <person name="McLaren S."/>
            <person name="Milne S."/>
            <person name="Mistry S."/>
            <person name="Moore M.J.F."/>
            <person name="Nickerson T."/>
            <person name="O'Dell C.N."/>
            <person name="Oliver K."/>
            <person name="Palmeiri A."/>
            <person name="Palmer S.A."/>
            <person name="Parker A."/>
            <person name="Patel D."/>
            <person name="Pearce A.V."/>
            <person name="Peck A.I."/>
            <person name="Pelan S."/>
            <person name="Phelps K."/>
            <person name="Phillimore B.J."/>
            <person name="Plumb R."/>
            <person name="Rajan J."/>
            <person name="Raymond C."/>
            <person name="Rouse G."/>
            <person name="Saenphimmachak C."/>
            <person name="Sehra H.K."/>
            <person name="Sheridan E."/>
            <person name="Shownkeen R."/>
            <person name="Sims S."/>
            <person name="Skuce C.D."/>
            <person name="Smith M."/>
            <person name="Steward C."/>
            <person name="Subramanian S."/>
            <person name="Sycamore N."/>
            <person name="Tracey A."/>
            <person name="Tromans A."/>
            <person name="Van Helmond Z."/>
            <person name="Wall M."/>
            <person name="Wallis J.M."/>
            <person name="White S."/>
            <person name="Whitehead S.L."/>
            <person name="Wilkinson J.E."/>
            <person name="Willey D.L."/>
            <person name="Williams H."/>
            <person name="Wilming L."/>
            <person name="Wray P.W."/>
            <person name="Wu Z."/>
            <person name="Coulson A."/>
            <person name="Vaudin M."/>
            <person name="Sulston J.E."/>
            <person name="Durbin R.M."/>
            <person name="Hubbard T."/>
            <person name="Wooster R."/>
            <person name="Dunham I."/>
            <person name="Carter N.P."/>
            <person name="McVean G."/>
            <person name="Ross M.T."/>
            <person name="Harrow J."/>
            <person name="Olson M.V."/>
            <person name="Beck S."/>
            <person name="Rogers J."/>
            <person name="Bentley D.R."/>
        </authorList>
    </citation>
    <scope>NUCLEOTIDE SEQUENCE [LARGE SCALE GENOMIC DNA]</scope>
</reference>
<reference key="3">
    <citation type="submission" date="2005-09" db="EMBL/GenBank/DDBJ databases">
        <authorList>
            <person name="Mural R.J."/>
            <person name="Istrail S."/>
            <person name="Sutton G.G."/>
            <person name="Florea L."/>
            <person name="Halpern A.L."/>
            <person name="Mobarry C.M."/>
            <person name="Lippert R."/>
            <person name="Walenz B."/>
            <person name="Shatkay H."/>
            <person name="Dew I."/>
            <person name="Miller J.R."/>
            <person name="Flanigan M.J."/>
            <person name="Edwards N.J."/>
            <person name="Bolanos R."/>
            <person name="Fasulo D."/>
            <person name="Halldorsson B.V."/>
            <person name="Hannenhalli S."/>
            <person name="Turner R."/>
            <person name="Yooseph S."/>
            <person name="Lu F."/>
            <person name="Nusskern D.R."/>
            <person name="Shue B.C."/>
            <person name="Zheng X.H."/>
            <person name="Zhong F."/>
            <person name="Delcher A.L."/>
            <person name="Huson D.H."/>
            <person name="Kravitz S.A."/>
            <person name="Mouchard L."/>
            <person name="Reinert K."/>
            <person name="Remington K.A."/>
            <person name="Clark A.G."/>
            <person name="Waterman M.S."/>
            <person name="Eichler E.E."/>
            <person name="Adams M.D."/>
            <person name="Hunkapiller M.W."/>
            <person name="Myers E.W."/>
            <person name="Venter J.C."/>
        </authorList>
    </citation>
    <scope>NUCLEOTIDE SEQUENCE [LARGE SCALE GENOMIC DNA]</scope>
</reference>
<reference key="4">
    <citation type="journal article" date="2004" name="Genome Res.">
        <title>The status, quality, and expansion of the NIH full-length cDNA project: the Mammalian Gene Collection (MGC).</title>
        <authorList>
            <consortium name="The MGC Project Team"/>
        </authorList>
    </citation>
    <scope>NUCLEOTIDE SEQUENCE [LARGE SCALE MRNA] (ISOFORM 1)</scope>
    <scope>NUCLEOTIDE SEQUENCE [LARGE SCALE MRNA] OF 251-757 (ISOFORM 2)</scope>
    <source>
        <tissue>Ovary</tissue>
    </source>
</reference>
<reference key="5">
    <citation type="journal article" date="2001" name="Mol. Cell. Biol.">
        <title>Proteinuria and perinatal lethality in mice lacking NEPH1, a novel protein with homology to NEPHRIN.</title>
        <authorList>
            <person name="Donoviel D.B."/>
            <person name="Freed D.D."/>
            <person name="Vogel H."/>
            <person name="Potter D.G."/>
            <person name="Hawkins E."/>
            <person name="Barrish J.P."/>
            <person name="Mathur B.N."/>
            <person name="Turner C.A."/>
            <person name="Geske R."/>
            <person name="Montgomery C.A."/>
            <person name="Starbuck M."/>
            <person name="Brandt M."/>
            <person name="Gupta A."/>
            <person name="Ramirez-Solis R."/>
            <person name="Zambrowicz B.P."/>
            <person name="Powell D.R."/>
        </authorList>
    </citation>
    <scope>NUCLEOTIDE SEQUENCE [MRNA] OF 1-590 (ISOFORM 1)</scope>
    <scope>TISSUE SPECIFICITY</scope>
    <source>
        <tissue>Kidney</tissue>
    </source>
</reference>
<reference key="6">
    <citation type="journal article" date="2004" name="Nat. Genet.">
        <title>Complete sequencing and characterization of 21,243 full-length human cDNAs.</title>
        <authorList>
            <person name="Ota T."/>
            <person name="Suzuki Y."/>
            <person name="Nishikawa T."/>
            <person name="Otsuki T."/>
            <person name="Sugiyama T."/>
            <person name="Irie R."/>
            <person name="Wakamatsu A."/>
            <person name="Hayashi K."/>
            <person name="Sato H."/>
            <person name="Nagai K."/>
            <person name="Kimura K."/>
            <person name="Makita H."/>
            <person name="Sekine M."/>
            <person name="Obayashi M."/>
            <person name="Nishi T."/>
            <person name="Shibahara T."/>
            <person name="Tanaka T."/>
            <person name="Ishii S."/>
            <person name="Yamamoto J."/>
            <person name="Saito K."/>
            <person name="Kawai Y."/>
            <person name="Isono Y."/>
            <person name="Nakamura Y."/>
            <person name="Nagahari K."/>
            <person name="Murakami K."/>
            <person name="Yasuda T."/>
            <person name="Iwayanagi T."/>
            <person name="Wagatsuma M."/>
            <person name="Shiratori A."/>
            <person name="Sudo H."/>
            <person name="Hosoiri T."/>
            <person name="Kaku Y."/>
            <person name="Kodaira H."/>
            <person name="Kondo H."/>
            <person name="Sugawara M."/>
            <person name="Takahashi M."/>
            <person name="Kanda K."/>
            <person name="Yokoi T."/>
            <person name="Furuya T."/>
            <person name="Kikkawa E."/>
            <person name="Omura Y."/>
            <person name="Abe K."/>
            <person name="Kamihara K."/>
            <person name="Katsuta N."/>
            <person name="Sato K."/>
            <person name="Tanikawa M."/>
            <person name="Yamazaki M."/>
            <person name="Ninomiya K."/>
            <person name="Ishibashi T."/>
            <person name="Yamashita H."/>
            <person name="Murakawa K."/>
            <person name="Fujimori K."/>
            <person name="Tanai H."/>
            <person name="Kimata M."/>
            <person name="Watanabe M."/>
            <person name="Hiraoka S."/>
            <person name="Chiba Y."/>
            <person name="Ishida S."/>
            <person name="Ono Y."/>
            <person name="Takiguchi S."/>
            <person name="Watanabe S."/>
            <person name="Yosida M."/>
            <person name="Hotuta T."/>
            <person name="Kusano J."/>
            <person name="Kanehori K."/>
            <person name="Takahashi-Fujii A."/>
            <person name="Hara H."/>
            <person name="Tanase T.-O."/>
            <person name="Nomura Y."/>
            <person name="Togiya S."/>
            <person name="Komai F."/>
            <person name="Hara R."/>
            <person name="Takeuchi K."/>
            <person name="Arita M."/>
            <person name="Imose N."/>
            <person name="Musashino K."/>
            <person name="Yuuki H."/>
            <person name="Oshima A."/>
            <person name="Sasaki N."/>
            <person name="Aotsuka S."/>
            <person name="Yoshikawa Y."/>
            <person name="Matsunawa H."/>
            <person name="Ichihara T."/>
            <person name="Shiohata N."/>
            <person name="Sano S."/>
            <person name="Moriya S."/>
            <person name="Momiyama H."/>
            <person name="Satoh N."/>
            <person name="Takami S."/>
            <person name="Terashima Y."/>
            <person name="Suzuki O."/>
            <person name="Nakagawa S."/>
            <person name="Senoh A."/>
            <person name="Mizoguchi H."/>
            <person name="Goto Y."/>
            <person name="Shimizu F."/>
            <person name="Wakebe H."/>
            <person name="Hishigaki H."/>
            <person name="Watanabe T."/>
            <person name="Sugiyama A."/>
            <person name="Takemoto M."/>
            <person name="Kawakami B."/>
            <person name="Yamazaki M."/>
            <person name="Watanabe K."/>
            <person name="Kumagai A."/>
            <person name="Itakura S."/>
            <person name="Fukuzumi Y."/>
            <person name="Fujimori Y."/>
            <person name="Komiyama M."/>
            <person name="Tashiro H."/>
            <person name="Tanigami A."/>
            <person name="Fujiwara T."/>
            <person name="Ono T."/>
            <person name="Yamada K."/>
            <person name="Fujii Y."/>
            <person name="Ozaki K."/>
            <person name="Hirao M."/>
            <person name="Ohmori Y."/>
            <person name="Kawabata A."/>
            <person name="Hikiji T."/>
            <person name="Kobatake N."/>
            <person name="Inagaki H."/>
            <person name="Ikema Y."/>
            <person name="Okamoto S."/>
            <person name="Okitani R."/>
            <person name="Kawakami T."/>
            <person name="Noguchi S."/>
            <person name="Itoh T."/>
            <person name="Shigeta K."/>
            <person name="Senba T."/>
            <person name="Matsumura K."/>
            <person name="Nakajima Y."/>
            <person name="Mizuno T."/>
            <person name="Morinaga M."/>
            <person name="Sasaki M."/>
            <person name="Togashi T."/>
            <person name="Oyama M."/>
            <person name="Hata H."/>
            <person name="Watanabe M."/>
            <person name="Komatsu T."/>
            <person name="Mizushima-Sugano J."/>
            <person name="Satoh T."/>
            <person name="Shirai Y."/>
            <person name="Takahashi Y."/>
            <person name="Nakagawa K."/>
            <person name="Okumura K."/>
            <person name="Nagase T."/>
            <person name="Nomura N."/>
            <person name="Kikuchi H."/>
            <person name="Masuho Y."/>
            <person name="Yamashita R."/>
            <person name="Nakai K."/>
            <person name="Yada T."/>
            <person name="Nakamura Y."/>
            <person name="Ohara O."/>
            <person name="Isogai T."/>
            <person name="Sugano S."/>
        </authorList>
    </citation>
    <scope>NUCLEOTIDE SEQUENCE [LARGE SCALE MRNA] OF 199-757 (ISOFORM 2)</scope>
    <scope>NUCLEOTIDE SEQUENCE [LARGE SCALE MRNA] OF 303-757 (ISOFORM 1)</scope>
</reference>
<reference key="7">
    <citation type="journal article" date="2004" name="Anal. Chem.">
        <title>Robust phosphoproteomic profiling of tyrosine phosphorylation sites from human T cells using immobilized metal affinity chromatography and tandem mass spectrometry.</title>
        <authorList>
            <person name="Brill L.M."/>
            <person name="Salomon A.R."/>
            <person name="Ficarro S.B."/>
            <person name="Mukherji M."/>
            <person name="Stettler-Gill M."/>
            <person name="Peters E.C."/>
        </authorList>
    </citation>
    <scope>PHOSPHORYLATION [LARGE SCALE ANALYSIS] AT TYR-622; TYR-625 AND TYR-724</scope>
    <scope>IDENTIFICATION BY MASS SPECTROMETRY [LARGE SCALE ANALYSIS]</scope>
    <source>
        <tissue>Leukemic T-cell</tissue>
    </source>
</reference>
<reference key="8">
    <citation type="journal article" date="2009" name="J. Proteome Res.">
        <title>Glycoproteomics analysis of human liver tissue by combination of multiple enzyme digestion and hydrazide chemistry.</title>
        <authorList>
            <person name="Chen R."/>
            <person name="Jiang X."/>
            <person name="Sun D."/>
            <person name="Han G."/>
            <person name="Wang F."/>
            <person name="Ye M."/>
            <person name="Wang L."/>
            <person name="Zou H."/>
        </authorList>
    </citation>
    <scope>GLYCOSYLATION [LARGE SCALE ANALYSIS] AT ASN-297</scope>
    <source>
        <tissue>Liver</tissue>
    </source>
</reference>
<reference key="9">
    <citation type="journal article" date="2009" name="Sci. Signal.">
        <title>Quantitative phosphoproteomic analysis of T cell receptor signaling reveals system-wide modulation of protein-protein interactions.</title>
        <authorList>
            <person name="Mayya V."/>
            <person name="Lundgren D.H."/>
            <person name="Hwang S.-I."/>
            <person name="Rezaul K."/>
            <person name="Wu L."/>
            <person name="Eng J.K."/>
            <person name="Rodionov V."/>
            <person name="Han D.K."/>
        </authorList>
    </citation>
    <scope>IDENTIFICATION BY MASS SPECTROMETRY [LARGE SCALE ANALYSIS]</scope>
    <source>
        <tissue>Leukemic T-cell</tissue>
    </source>
</reference>
<reference key="10">
    <citation type="journal article" date="2013" name="J. Proteome Res.">
        <title>Toward a comprehensive characterization of a human cancer cell phosphoproteome.</title>
        <authorList>
            <person name="Zhou H."/>
            <person name="Di Palma S."/>
            <person name="Preisinger C."/>
            <person name="Peng M."/>
            <person name="Polat A.N."/>
            <person name="Heck A.J."/>
            <person name="Mohammed S."/>
        </authorList>
    </citation>
    <scope>PHOSPHORYLATION [LARGE SCALE ANALYSIS] AT SER-574</scope>
    <scope>IDENTIFICATION BY MASS SPECTROMETRY [LARGE SCALE ANALYSIS]</scope>
    <source>
        <tissue>Cervix carcinoma</tissue>
    </source>
</reference>
<reference key="11">
    <citation type="journal article" date="2019" name="Kidney Int.">
        <title>Mutations in KIRREL1, a slit diaphragm component, cause steroid-resistant nephrotic syndrome.</title>
        <authorList>
            <person name="Solanki A.K."/>
            <person name="Widmeier E."/>
            <person name="Arif E."/>
            <person name="Sharma S."/>
            <person name="Daga A."/>
            <person name="Srivastava P."/>
            <person name="Kwon S.H."/>
            <person name="Hugo H."/>
            <person name="Nakayama M."/>
            <person name="Mann N."/>
            <person name="Majmundar A.J."/>
            <person name="Tan W."/>
            <person name="Gee H.Y."/>
            <person name="Sadowski C.E."/>
            <person name="Rinat C."/>
            <person name="Becker-Cohen R."/>
            <person name="Bergmann C."/>
            <person name="Rosen S."/>
            <person name="Somers M."/>
            <person name="Shril S."/>
            <person name="Huber T.B."/>
            <person name="Mane S."/>
            <person name="Hildebrandt F."/>
            <person name="Nihalani D."/>
        </authorList>
    </citation>
    <scope>FUNCTION</scope>
    <scope>SUBCELLULAR LOCATION</scope>
    <scope>INVOLVEMENT IN NPHS23</scope>
    <scope>VARIANTS NPHS23 CYS-440 AND LEU-573</scope>
    <scope>CHARACTERIZATION OF VARIANTS NPHS23 CYS-440 AND LEU-573</scope>
</reference>
<dbReference type="EMBL" id="AY302131">
    <property type="protein sequence ID" value="AAP59845.1"/>
    <property type="status" value="ALT_FRAME"/>
    <property type="molecule type" value="mRNA"/>
</dbReference>
<dbReference type="EMBL" id="AL139010">
    <property type="status" value="NOT_ANNOTATED_CDS"/>
    <property type="molecule type" value="Genomic_DNA"/>
</dbReference>
<dbReference type="EMBL" id="CH471121">
    <property type="protein sequence ID" value="EAW52853.1"/>
    <property type="molecule type" value="Genomic_DNA"/>
</dbReference>
<dbReference type="EMBL" id="BC025268">
    <property type="protein sequence ID" value="AAH25268.1"/>
    <property type="molecule type" value="mRNA"/>
</dbReference>
<dbReference type="EMBL" id="BC051356">
    <property type="protein sequence ID" value="AAH51356.1"/>
    <property type="molecule type" value="mRNA"/>
</dbReference>
<dbReference type="EMBL" id="BC067097">
    <property type="protein sequence ID" value="AAH67097.1"/>
    <property type="molecule type" value="mRNA"/>
</dbReference>
<dbReference type="EMBL" id="BC082969">
    <property type="protein sequence ID" value="AAH82969.1"/>
    <property type="molecule type" value="mRNA"/>
</dbReference>
<dbReference type="EMBL" id="BC109192">
    <property type="protein sequence ID" value="AAI09193.1"/>
    <property type="molecule type" value="mRNA"/>
</dbReference>
<dbReference type="EMBL" id="BC109193">
    <property type="protein sequence ID" value="AAI09194.1"/>
    <property type="molecule type" value="mRNA"/>
</dbReference>
<dbReference type="EMBL" id="AY017369">
    <property type="protein sequence ID" value="AAK00529.2"/>
    <property type="molecule type" value="mRNA"/>
</dbReference>
<dbReference type="EMBL" id="AK001707">
    <property type="protein sequence ID" value="BAA91850.1"/>
    <property type="status" value="ALT_INIT"/>
    <property type="molecule type" value="mRNA"/>
</dbReference>
<dbReference type="EMBL" id="AK022708">
    <property type="protein sequence ID" value="BAB14192.1"/>
    <property type="status" value="ALT_INIT"/>
    <property type="molecule type" value="mRNA"/>
</dbReference>
<dbReference type="CCDS" id="CCDS1172.2">
    <molecule id="Q96J84-1"/>
</dbReference>
<dbReference type="RefSeq" id="NP_001273278.1">
    <property type="nucleotide sequence ID" value="NM_001286349.1"/>
</dbReference>
<dbReference type="RefSeq" id="NP_060710.3">
    <molecule id="Q96J84-1"/>
    <property type="nucleotide sequence ID" value="NM_018240.6"/>
</dbReference>
<dbReference type="RefSeq" id="XP_005245362.1">
    <molecule id="Q96J84-2"/>
    <property type="nucleotide sequence ID" value="XM_005245305.6"/>
</dbReference>
<dbReference type="RefSeq" id="XP_054193406.1">
    <molecule id="Q96J84-2"/>
    <property type="nucleotide sequence ID" value="XM_054337431.1"/>
</dbReference>
<dbReference type="SMR" id="Q96J84"/>
<dbReference type="BioGRID" id="120534">
    <property type="interactions" value="133"/>
</dbReference>
<dbReference type="FunCoup" id="Q96J84">
    <property type="interactions" value="772"/>
</dbReference>
<dbReference type="IntAct" id="Q96J84">
    <property type="interactions" value="63"/>
</dbReference>
<dbReference type="MINT" id="Q96J84"/>
<dbReference type="STRING" id="9606.ENSP00000352138"/>
<dbReference type="GlyCosmos" id="Q96J84">
    <property type="glycosylation" value="4 sites, No reported glycans"/>
</dbReference>
<dbReference type="GlyGen" id="Q96J84">
    <property type="glycosylation" value="8 sites, 3 N-linked glycans (3 sites), 2 O-linked glycans (3 sites)"/>
</dbReference>
<dbReference type="iPTMnet" id="Q96J84"/>
<dbReference type="PhosphoSitePlus" id="Q96J84"/>
<dbReference type="BioMuta" id="KIRREL1"/>
<dbReference type="DMDM" id="54036152"/>
<dbReference type="jPOST" id="Q96J84"/>
<dbReference type="MassIVE" id="Q96J84"/>
<dbReference type="PaxDb" id="9606-ENSP00000352138"/>
<dbReference type="PeptideAtlas" id="Q96J84"/>
<dbReference type="ProteomicsDB" id="76896">
    <molecule id="Q96J84-1"/>
</dbReference>
<dbReference type="ProteomicsDB" id="76897">
    <molecule id="Q96J84-2"/>
</dbReference>
<dbReference type="ProteomicsDB" id="76898">
    <molecule id="Q96J84-3"/>
</dbReference>
<dbReference type="Pumba" id="Q96J84"/>
<dbReference type="Antibodypedia" id="34235">
    <property type="antibodies" value="173 antibodies from 26 providers"/>
</dbReference>
<dbReference type="DNASU" id="55243"/>
<dbReference type="Ensembl" id="ENST00000359209.11">
    <molecule id="Q96J84-1"/>
    <property type="protein sequence ID" value="ENSP00000352138.6"/>
    <property type="gene ID" value="ENSG00000183853.18"/>
</dbReference>
<dbReference type="GeneID" id="55243"/>
<dbReference type="KEGG" id="hsa:55243"/>
<dbReference type="MANE-Select" id="ENST00000359209.11">
    <property type="protein sequence ID" value="ENSP00000352138.6"/>
    <property type="RefSeq nucleotide sequence ID" value="NM_018240.7"/>
    <property type="RefSeq protein sequence ID" value="NP_060710.3"/>
</dbReference>
<dbReference type="UCSC" id="uc001frn.6">
    <molecule id="Q96J84-1"/>
    <property type="organism name" value="human"/>
</dbReference>
<dbReference type="AGR" id="HGNC:15734"/>
<dbReference type="CTD" id="55243"/>
<dbReference type="DisGeNET" id="55243"/>
<dbReference type="GeneCards" id="KIRREL1"/>
<dbReference type="HGNC" id="HGNC:15734">
    <property type="gene designation" value="KIRREL1"/>
</dbReference>
<dbReference type="HPA" id="ENSG00000183853">
    <property type="expression patterns" value="Low tissue specificity"/>
</dbReference>
<dbReference type="MalaCards" id="KIRREL1"/>
<dbReference type="MIM" id="607428">
    <property type="type" value="gene"/>
</dbReference>
<dbReference type="MIM" id="619201">
    <property type="type" value="phenotype"/>
</dbReference>
<dbReference type="neXtProt" id="NX_Q96J84"/>
<dbReference type="OpenTargets" id="ENSG00000183853"/>
<dbReference type="PharmGKB" id="PA30126"/>
<dbReference type="VEuPathDB" id="HostDB:ENSG00000183853"/>
<dbReference type="eggNOG" id="KOG3510">
    <property type="taxonomic scope" value="Eukaryota"/>
</dbReference>
<dbReference type="GeneTree" id="ENSGT00940000155795"/>
<dbReference type="InParanoid" id="Q96J84"/>
<dbReference type="OMA" id="DTGQFNL"/>
<dbReference type="OrthoDB" id="10048737at2759"/>
<dbReference type="PAN-GO" id="Q96J84">
    <property type="GO annotations" value="4 GO annotations based on evolutionary models"/>
</dbReference>
<dbReference type="PhylomeDB" id="Q96J84"/>
<dbReference type="TreeFam" id="TF327139"/>
<dbReference type="PathwayCommons" id="Q96J84"/>
<dbReference type="Reactome" id="R-HSA-373753">
    <property type="pathway name" value="Nephrin family interactions"/>
</dbReference>
<dbReference type="SignaLink" id="Q96J84"/>
<dbReference type="SIGNOR" id="Q96J84"/>
<dbReference type="BioGRID-ORCS" id="55243">
    <property type="hits" value="38 hits in 1165 CRISPR screens"/>
</dbReference>
<dbReference type="ChiTaRS" id="KIRREL">
    <property type="organism name" value="human"/>
</dbReference>
<dbReference type="GeneWiki" id="KIRREL"/>
<dbReference type="GenomeRNAi" id="55243"/>
<dbReference type="Pharos" id="Q96J84">
    <property type="development level" value="Tbio"/>
</dbReference>
<dbReference type="PRO" id="PR:Q96J84"/>
<dbReference type="Proteomes" id="UP000005640">
    <property type="component" value="Chromosome 1"/>
</dbReference>
<dbReference type="RNAct" id="Q96J84">
    <property type="molecule type" value="protein"/>
</dbReference>
<dbReference type="Bgee" id="ENSG00000183853">
    <property type="expression patterns" value="Expressed in stromal cell of endometrium and 136 other cell types or tissues"/>
</dbReference>
<dbReference type="ExpressionAtlas" id="Q96J84">
    <property type="expression patterns" value="baseline and differential"/>
</dbReference>
<dbReference type="GO" id="GO:0005911">
    <property type="term" value="C:cell-cell junction"/>
    <property type="evidence" value="ECO:0000314"/>
    <property type="project" value="UniProtKB"/>
</dbReference>
<dbReference type="GO" id="GO:0043198">
    <property type="term" value="C:dendritic shaft"/>
    <property type="evidence" value="ECO:0007669"/>
    <property type="project" value="Ensembl"/>
</dbReference>
<dbReference type="GO" id="GO:0048471">
    <property type="term" value="C:perinuclear region of cytoplasm"/>
    <property type="evidence" value="ECO:0000314"/>
    <property type="project" value="UniProtKB"/>
</dbReference>
<dbReference type="GO" id="GO:0005886">
    <property type="term" value="C:plasma membrane"/>
    <property type="evidence" value="ECO:0000314"/>
    <property type="project" value="UniProtKB"/>
</dbReference>
<dbReference type="GO" id="GO:0050839">
    <property type="term" value="F:cell adhesion molecule binding"/>
    <property type="evidence" value="ECO:0000318"/>
    <property type="project" value="GO_Central"/>
</dbReference>
<dbReference type="GO" id="GO:0017022">
    <property type="term" value="F:myosin binding"/>
    <property type="evidence" value="ECO:0000353"/>
    <property type="project" value="UniProtKB"/>
</dbReference>
<dbReference type="GO" id="GO:0098609">
    <property type="term" value="P:cell-cell adhesion"/>
    <property type="evidence" value="ECO:0000318"/>
    <property type="project" value="GO_Central"/>
</dbReference>
<dbReference type="GO" id="GO:0045217">
    <property type="term" value="P:cell-cell junction maintenance"/>
    <property type="evidence" value="ECO:0000315"/>
    <property type="project" value="UniProtKB"/>
</dbReference>
<dbReference type="GO" id="GO:0003094">
    <property type="term" value="P:glomerular filtration"/>
    <property type="evidence" value="ECO:0000315"/>
    <property type="project" value="UniProtKB"/>
</dbReference>
<dbReference type="GO" id="GO:0030838">
    <property type="term" value="P:positive regulation of actin filament polymerization"/>
    <property type="evidence" value="ECO:0007669"/>
    <property type="project" value="Ensembl"/>
</dbReference>
<dbReference type="GO" id="GO:0097017">
    <property type="term" value="P:renal protein absorption"/>
    <property type="evidence" value="ECO:0007669"/>
    <property type="project" value="Ensembl"/>
</dbReference>
<dbReference type="CDD" id="cd00096">
    <property type="entry name" value="Ig"/>
    <property type="match status" value="1"/>
</dbReference>
<dbReference type="CDD" id="cd05759">
    <property type="entry name" value="IgI_2_KIRREL3-like"/>
    <property type="match status" value="1"/>
</dbReference>
<dbReference type="CDD" id="cd05898">
    <property type="entry name" value="IgI_5_KIRREL3"/>
    <property type="match status" value="1"/>
</dbReference>
<dbReference type="CDD" id="cd12087">
    <property type="entry name" value="TM_EGFR-like"/>
    <property type="match status" value="1"/>
</dbReference>
<dbReference type="FunFam" id="2.60.40.10:FF:000232">
    <property type="entry name" value="Kirre like nephrin family adhesion molecule 1"/>
    <property type="match status" value="1"/>
</dbReference>
<dbReference type="FunFam" id="2.60.40.10:FF:000077">
    <property type="entry name" value="Kirre like nephrin family adhesion molecule 3"/>
    <property type="match status" value="1"/>
</dbReference>
<dbReference type="FunFam" id="2.60.40.10:FF:000094">
    <property type="entry name" value="Kirre like nephrin family adhesion molecule 3"/>
    <property type="match status" value="1"/>
</dbReference>
<dbReference type="FunFam" id="2.60.40.10:FF:000103">
    <property type="entry name" value="Kirre like nephrin family adhesion molecule 3"/>
    <property type="match status" value="1"/>
</dbReference>
<dbReference type="FunFam" id="2.60.40.10:FF:000170">
    <property type="entry name" value="Kirre like nephrin family adhesion molecule 3"/>
    <property type="match status" value="1"/>
</dbReference>
<dbReference type="Gene3D" id="2.60.40.10">
    <property type="entry name" value="Immunoglobulins"/>
    <property type="match status" value="5"/>
</dbReference>
<dbReference type="InterPro" id="IPR013162">
    <property type="entry name" value="CD80_C2-set"/>
</dbReference>
<dbReference type="InterPro" id="IPR051275">
    <property type="entry name" value="Cell_adhesion_signaling"/>
</dbReference>
<dbReference type="InterPro" id="IPR007110">
    <property type="entry name" value="Ig-like_dom"/>
</dbReference>
<dbReference type="InterPro" id="IPR036179">
    <property type="entry name" value="Ig-like_dom_sf"/>
</dbReference>
<dbReference type="InterPro" id="IPR013783">
    <property type="entry name" value="Ig-like_fold"/>
</dbReference>
<dbReference type="InterPro" id="IPR013098">
    <property type="entry name" value="Ig_I-set"/>
</dbReference>
<dbReference type="InterPro" id="IPR003599">
    <property type="entry name" value="Ig_sub"/>
</dbReference>
<dbReference type="InterPro" id="IPR003598">
    <property type="entry name" value="Ig_sub2"/>
</dbReference>
<dbReference type="PANTHER" id="PTHR11640:SF14">
    <property type="entry name" value="KIN OF IRRE-LIKE PROTEIN 1"/>
    <property type="match status" value="1"/>
</dbReference>
<dbReference type="PANTHER" id="PTHR11640">
    <property type="entry name" value="NEPHRIN"/>
    <property type="match status" value="1"/>
</dbReference>
<dbReference type="Pfam" id="PF08205">
    <property type="entry name" value="C2-set_2"/>
    <property type="match status" value="1"/>
</dbReference>
<dbReference type="Pfam" id="PF07679">
    <property type="entry name" value="I-set"/>
    <property type="match status" value="1"/>
</dbReference>
<dbReference type="Pfam" id="PF13927">
    <property type="entry name" value="Ig_3"/>
    <property type="match status" value="1"/>
</dbReference>
<dbReference type="SMART" id="SM00409">
    <property type="entry name" value="IG"/>
    <property type="match status" value="5"/>
</dbReference>
<dbReference type="SMART" id="SM00408">
    <property type="entry name" value="IGc2"/>
    <property type="match status" value="2"/>
</dbReference>
<dbReference type="SUPFAM" id="SSF48726">
    <property type="entry name" value="Immunoglobulin"/>
    <property type="match status" value="5"/>
</dbReference>
<dbReference type="PROSITE" id="PS50835">
    <property type="entry name" value="IG_LIKE"/>
    <property type="match status" value="5"/>
</dbReference>
<gene>
    <name evidence="13" type="primary">KIRREL1</name>
    <name type="synonym">KIRREL</name>
    <name type="synonym">NEPH1</name>
</gene>
<evidence type="ECO:0000250" key="1"/>
<evidence type="ECO:0000250" key="2">
    <source>
        <dbReference type="UniProtKB" id="Q6X936"/>
    </source>
</evidence>
<evidence type="ECO:0000255" key="3"/>
<evidence type="ECO:0000255" key="4">
    <source>
        <dbReference type="PROSITE-ProRule" id="PRU00114"/>
    </source>
</evidence>
<evidence type="ECO:0000256" key="5">
    <source>
        <dbReference type="SAM" id="MobiDB-lite"/>
    </source>
</evidence>
<evidence type="ECO:0000269" key="6">
    <source>
    </source>
</evidence>
<evidence type="ECO:0000269" key="7">
    <source>
    </source>
</evidence>
<evidence type="ECO:0000269" key="8">
    <source>
    </source>
</evidence>
<evidence type="ECO:0000303" key="9">
    <source>
    </source>
</evidence>
<evidence type="ECO:0000303" key="10">
    <source>
    </source>
</evidence>
<evidence type="ECO:0000303" key="11">
    <source ref="1"/>
</evidence>
<evidence type="ECO:0000305" key="12"/>
<evidence type="ECO:0000312" key="13">
    <source>
        <dbReference type="HGNC" id="HGNC:15734"/>
    </source>
</evidence>
<evidence type="ECO:0007744" key="14">
    <source>
    </source>
</evidence>
<evidence type="ECO:0007744" key="15">
    <source>
    </source>
</evidence>
<sequence>MLSLLVWILTLSDTFSQGTQTRFSQEPADQTVVAGQRAVLPCVLLNYSGIVQWTKDGLALGMGQGLKAWPRYRVVGSADAGQYNLEITDAELSDDASYECQATEAALRSRRAKLTVLIPPEDTRIDGGPVILLQAGTPHNLTCRAFNAKPAATIIWFRDGTQQEGAVASTELLKDGKRETTVSQLLINPTDLDIGRVFTCRSMNEAIPSGKETSIELDVHHPPTVTLSIEPQTVQEGERVVFTCQATANPEILGYRWAKGGFLIEDAHESRYETNVDYSFFTEPVSCEVHNKVGSTNVSTLVNVHFAPRIVVDPKPTTTDIGSDVTLTCVWVGNPPLTLTWTKKDSNMVLSNSNQLLLKSVTQADAGTYTCRAIVPRIGVAEREVPLYVNGPPIISSEAVQYAVRGDGGKVECFIGSTPPPDRIAWAWKENFLEVGTLERYTVERTNSGSGVLSTLTINNVMEADFQTHYNCTAWNSFGPGTAIIQLEEREVLPVGIIAGATIGASILLIFFFIALVFFLYRRRKGSRKDVTLRKLDIKVETVNREPLTMHSDREDDTASVSTATRVMKAIYSSFKDDVDLKQDLRCDTIDTREEYEMKDPTNGYYNVRAHEDRPSSRAVLYADYRAPGPARFDGRPSSRLSHSSGYAQLNTYSRGPASDYGPEPTPPGPAAPAGTDTTSQLSYENYEKFNSHPFPGAAGYPTYRLGYPQAPPSGLERTPYEAYDPIGKYATATRFSYTSQHSDYGQRFQQRMQTHV</sequence>
<protein>
    <recommendedName>
        <fullName>Kin of IRRE-like protein 1</fullName>
    </recommendedName>
    <alternativeName>
        <fullName>Kin of irregular chiasm-like protein 1</fullName>
    </alternativeName>
    <alternativeName>
        <fullName>Nephrin-like protein 1</fullName>
    </alternativeName>
</protein>
<proteinExistence type="evidence at protein level"/>
<keyword id="KW-0025">Alternative splicing</keyword>
<keyword id="KW-1003">Cell membrane</keyword>
<keyword id="KW-0225">Disease variant</keyword>
<keyword id="KW-1015">Disulfide bond</keyword>
<keyword id="KW-0325">Glycoprotein</keyword>
<keyword id="KW-0393">Immunoglobulin domain</keyword>
<keyword id="KW-0472">Membrane</keyword>
<keyword id="KW-0597">Phosphoprotein</keyword>
<keyword id="KW-1267">Proteomics identification</keyword>
<keyword id="KW-1185">Reference proteome</keyword>
<keyword id="KW-0677">Repeat</keyword>
<keyword id="KW-0732">Signal</keyword>
<keyword id="KW-0812">Transmembrane</keyword>
<keyword id="KW-1133">Transmembrane helix</keyword>
<accession>Q96J84</accession>
<accession>Q5W0F8</accession>
<accession>Q5XKC6</accession>
<accession>Q7Z696</accession>
<accession>Q7Z7N8</accession>
<accession>Q8TB15</accession>
<accession>Q9H9N1</accession>
<accession>Q9NVA5</accession>
<comment type="function">
    <text evidence="1 8">Required for proper function of the glomerular filtration barrier. It is involved in the maintenance of a stable podocyte architecture with interdigitating foot processes connected by specialized cell-cell junctions, known as the slit diaphragm (PubMed:31472902). It is a signaling protein that needs the presence of TEC kinases to fully trans-activate the transcription factor AP-1 (By similarity).</text>
</comment>
<comment type="subunit">
    <text evidence="1">Interacts with TJP1/ZO-1 and with NPHS2/podocin (via the C-terminus). Interacts with NPHS1/nephrin (via the Ig-like domains); this interaction is dependent on KIRREL1 glycosylation. Homodimer (via the Ig-like domains). Interacts when tyrosine-phosphorylated with GRB2 (By similarity).</text>
</comment>
<comment type="interaction">
    <interactant intactId="EBI-3988456">
        <id>Q96J84</id>
    </interactant>
    <interactant intactId="EBI-79553">
        <id>Q07157</id>
        <label>TJP1</label>
    </interactant>
    <organismsDiffer>false</organismsDiffer>
    <experiments>7</experiments>
</comment>
<comment type="subcellular location">
    <subcellularLocation>
        <location evidence="8">Cell membrane</location>
        <topology evidence="12">Single-pass type I membrane protein</topology>
    </subcellularLocation>
    <text>Predominantly located at podocyte slit diaphragm.</text>
</comment>
<comment type="alternative products">
    <event type="alternative splicing"/>
    <isoform>
        <id>Q96J84-1</id>
        <name>1</name>
        <sequence type="displayed"/>
    </isoform>
    <isoform>
        <id>Q96J84-2</id>
        <name>2</name>
        <sequence type="described" ref="VSP_011733"/>
    </isoform>
    <isoform>
        <id>Q96J84-3</id>
        <name>3</name>
        <sequence type="described" ref="VSP_011732"/>
    </isoform>
</comment>
<comment type="tissue specificity">
    <text evidence="6">Abundantly expressed in kidney. Specifically expressed in podocytes of kidney glomeruli.</text>
</comment>
<comment type="PTM">
    <text evidence="1">Phosphorylation probably regulates the interaction with NSH2. Phosphorylated at Tyr-605 and Tyr-606 by FYN, leading to GRB2 binding (By similarity).</text>
</comment>
<comment type="PTM">
    <text evidence="1">N-glycosylated.</text>
</comment>
<comment type="disease" evidence="8">
    <disease id="DI-06033">
        <name>Nephrotic syndrome 23</name>
        <acronym>NPHS23</acronym>
        <description>A form of nephrotic syndrome, a renal disease clinically characterized by severe proteinuria, resulting in complications such as hypoalbuminemia, hyperlipidemia and edema. Kidney biopsies show non-specific histologic changes such as focal segmental glomerulosclerosis and diffuse mesangial proliferation. Some affected individuals have an inherited steroid-resistant form that progresses to end-stage renal failure. NPHS23 is an autosomal recessive form characterized by onset of proteinuria in the first or second decade of life, and variable outcome. Some patients have normal renal function after many years, whereas others may progress to chronic kidney disease.</description>
        <dbReference type="MIM" id="619201"/>
    </disease>
    <text>The disease is caused by variants affecting the gene represented in this entry.</text>
</comment>
<comment type="similarity">
    <text evidence="12">Belongs to the immunoglobulin superfamily.</text>
</comment>
<comment type="sequence caution" evidence="12">
    <conflict type="frameshift">
        <sequence resource="EMBL-CDS" id="AAP59845"/>
    </conflict>
</comment>
<comment type="sequence caution" evidence="12">
    <conflict type="erroneous initiation">
        <sequence resource="EMBL-CDS" id="BAA91850"/>
    </conflict>
</comment>
<comment type="sequence caution" evidence="12">
    <conflict type="erroneous initiation">
        <sequence resource="EMBL-CDS" id="BAB14192"/>
    </conflict>
</comment>
<name>KIRR1_HUMAN</name>
<organism>
    <name type="scientific">Homo sapiens</name>
    <name type="common">Human</name>
    <dbReference type="NCBI Taxonomy" id="9606"/>
    <lineage>
        <taxon>Eukaryota</taxon>
        <taxon>Metazoa</taxon>
        <taxon>Chordata</taxon>
        <taxon>Craniata</taxon>
        <taxon>Vertebrata</taxon>
        <taxon>Euteleostomi</taxon>
        <taxon>Mammalia</taxon>
        <taxon>Eutheria</taxon>
        <taxon>Euarchontoglires</taxon>
        <taxon>Primates</taxon>
        <taxon>Haplorrhini</taxon>
        <taxon>Catarrhini</taxon>
        <taxon>Hominidae</taxon>
        <taxon>Homo</taxon>
    </lineage>
</organism>
<feature type="signal peptide" evidence="3">
    <location>
        <begin position="1"/>
        <end position="16"/>
    </location>
</feature>
<feature type="chain" id="PRO_0000015093" description="Kin of IRRE-like protein 1">
    <location>
        <begin position="17"/>
        <end position="757"/>
    </location>
</feature>
<feature type="topological domain" description="Extracellular" evidence="3">
    <location>
        <begin position="17"/>
        <end position="499"/>
    </location>
</feature>
<feature type="transmembrane region" description="Helical" evidence="3">
    <location>
        <begin position="500"/>
        <end position="520"/>
    </location>
</feature>
<feature type="topological domain" description="Cytoplasmic" evidence="3">
    <location>
        <begin position="521"/>
        <end position="757"/>
    </location>
</feature>
<feature type="domain" description="Ig-like C2-type 1">
    <location>
        <begin position="21"/>
        <end position="115"/>
    </location>
</feature>
<feature type="domain" description="Ig-like C2-type 2">
    <location>
        <begin position="120"/>
        <end position="216"/>
    </location>
</feature>
<feature type="domain" description="Ig-like C2-type 3">
    <location>
        <begin position="223"/>
        <end position="299"/>
    </location>
</feature>
<feature type="domain" description="Ig-like C2-type 4">
    <location>
        <begin position="308"/>
        <end position="387"/>
    </location>
</feature>
<feature type="domain" description="Ig-like C2-type 5">
    <location>
        <begin position="392"/>
        <end position="488"/>
    </location>
</feature>
<feature type="region of interest" description="Disordered" evidence="5">
    <location>
        <begin position="649"/>
        <end position="679"/>
    </location>
</feature>
<feature type="short sequence motif" description="Cell attachment site" evidence="3">
    <location>
        <begin position="405"/>
        <end position="407"/>
    </location>
</feature>
<feature type="modified residue" description="Phosphoserine" evidence="15">
    <location>
        <position position="574"/>
    </location>
</feature>
<feature type="modified residue" description="Phosphotyrosine; by FYN" evidence="2">
    <location>
        <position position="605"/>
    </location>
</feature>
<feature type="modified residue" description="Phosphotyrosine; by FYN" evidence="2">
    <location>
        <position position="606"/>
    </location>
</feature>
<feature type="modified residue" description="Phosphotyrosine" evidence="14">
    <location>
        <position position="622"/>
    </location>
</feature>
<feature type="modified residue" description="Phosphotyrosine" evidence="14">
    <location>
        <position position="625"/>
    </location>
</feature>
<feature type="modified residue" description="Phosphotyrosine" evidence="14">
    <location>
        <position position="724"/>
    </location>
</feature>
<feature type="glycosylation site" description="N-linked (GlcNAc...) asparagine" evidence="3">
    <location>
        <position position="46"/>
    </location>
</feature>
<feature type="glycosylation site" description="N-linked (GlcNAc...) asparagine" evidence="3">
    <location>
        <position position="140"/>
    </location>
</feature>
<feature type="glycosylation site" description="N-linked (GlcNAc...) asparagine" evidence="7">
    <location>
        <position position="297"/>
    </location>
</feature>
<feature type="glycosylation site" description="N-linked (GlcNAc...) asparagine" evidence="3">
    <location>
        <position position="471"/>
    </location>
</feature>
<feature type="disulfide bond" evidence="4">
    <location>
        <begin position="42"/>
        <end position="100"/>
    </location>
</feature>
<feature type="disulfide bond" evidence="4">
    <location>
        <begin position="143"/>
        <end position="200"/>
    </location>
</feature>
<feature type="disulfide bond" evidence="4">
    <location>
        <begin position="244"/>
        <end position="287"/>
    </location>
</feature>
<feature type="disulfide bond" evidence="4">
    <location>
        <begin position="329"/>
        <end position="371"/>
    </location>
</feature>
<feature type="disulfide bond" evidence="4">
    <location>
        <begin position="413"/>
        <end position="472"/>
    </location>
</feature>
<feature type="splice variant" id="VSP_011732" description="In isoform 3." evidence="11">
    <original>IPPEDTRIDGGPVILLQAGTPHNLTCRAFNAKPAATIIWFRDGTQQEGAVASTELLKDGKRETTVSQLLINPTDLDIGRVFTCRSMNEAIPSGKETSIELDVHH</original>
    <variation>N</variation>
    <location>
        <begin position="118"/>
        <end position="221"/>
    </location>
</feature>
<feature type="splice variant" id="VSP_011733" description="In isoform 2." evidence="9 10">
    <original>M</original>
    <variation>MGPRPPGSPPEAALSAQ</variation>
    <location>
        <position position="348"/>
    </location>
</feature>
<feature type="sequence variant" id="VAR_059428" description="In dbSNP:rs35927201.">
    <original>A</original>
    <variation>T</variation>
    <location>
        <position position="78"/>
    </location>
</feature>
<feature type="sequence variant" id="VAR_085245" description="In NPHS23; decreased localization to cell membrane due to intracellular retention; affects integrity of podocyte cell-cell junctions and leads to altered cellular permeability; dbSNP:rs764090370." evidence="8">
    <original>R</original>
    <variation>C</variation>
    <location>
        <position position="440"/>
    </location>
</feature>
<feature type="sequence variant" id="VAR_085246" description="In NPHS23; uncertain significance; affects integrity of podocyte cell-cell junctions and leads to altered cellular permeability; dbSNP:rs139995772." evidence="8">
    <original>S</original>
    <variation>L</variation>
    <location>
        <position position="573"/>
    </location>
</feature>